<sequence>MNKRDYMNTSVQEPPLDYSFRSIHVIQDLVNEEPRTGLRPLKRSKSGKSLTQSLWLNNNVLNDLRDFNQVASQLLEHPENLAWIDLSFNDLTSIDPVLTTFFNLSVLYLHGNSIQRLGEVNKLAVLPRLRSLTLHGNPMEEEKGYRQYVLCTLSRITTFDFSGVTKADRTTAEVWKRMNIKPKKAWTKQNTL</sequence>
<proteinExistence type="evidence at protein level"/>
<accession>Q96E66</accession>
<accession>B2R7X1</accession>
<accession>B6CZ35</accession>
<accession>B6CZ36</accession>
<accession>B6CZ37</accession>
<accession>B6CZ38</accession>
<accession>B6CZ39</accession>
<accession>B7Z5I4</accession>
<feature type="chain" id="PRO_0000225500" description="Leucine-rich repeat-containing protein 51">
    <location>
        <begin position="1"/>
        <end position="192"/>
    </location>
</feature>
<feature type="repeat" description="LRR 1">
    <location>
        <begin position="49"/>
        <end position="71"/>
    </location>
</feature>
<feature type="repeat" description="LRR 2">
    <location>
        <begin position="80"/>
        <end position="101"/>
    </location>
</feature>
<feature type="repeat" description="LRR 3">
    <location>
        <begin position="103"/>
        <end position="124"/>
    </location>
</feature>
<feature type="domain" description="LRRCT">
    <location>
        <begin position="137"/>
        <end position="175"/>
    </location>
</feature>
<feature type="splice variant" id="VSP_041852" description="In isoform 6." evidence="2">
    <original>MNKRDYMNTSVQEPPLDYSFRSIHVIQ</original>
    <variation>MVEFQPSVT</variation>
    <location>
        <begin position="1"/>
        <end position="27"/>
    </location>
</feature>
<feature type="splice variant" id="VSP_036893" description="In isoform 4." evidence="3">
    <original>RQYVLCTLSRITTFDFSGVTKADRTTAEVWKRMNIKPKKAWTKQNTL</original>
    <variation>SRPWTPRPVLCSGPPAQGPGRDHVPCHCIGLPATGGNIAGAVPALLPIAGAHGLAAKPPRLPVRAADRGAGLQLRAHPCPAR</variation>
    <location>
        <begin position="146"/>
        <end position="192"/>
    </location>
</feature>
<feature type="splice variant" id="VSP_036894" description="In isoform 5." evidence="3">
    <original>RQYVLCTLSRITTFDFSGVTKADRTTAEVWKRMNIKPKKAWTKQNTL</original>
    <variation>SRPWTPRPVLCSGPPAQPPRLPVRAADRGAGLQLRAHPCPAR</variation>
    <location>
        <begin position="146"/>
        <end position="192"/>
    </location>
</feature>
<feature type="splice variant" id="VSP_036895" description="In isoform 2." evidence="3">
    <original>QYVLCTLSRITTFDFSGVTKADRTTAEVWKRMNIKPKKAWTKQNTL</original>
    <variation>VPGSVEMPHRPP</variation>
    <location>
        <begin position="147"/>
        <end position="192"/>
    </location>
</feature>
<feature type="splice variant" id="VSP_036896" description="In isoform 3." evidence="3">
    <location>
        <begin position="147"/>
        <end position="192"/>
    </location>
</feature>
<feature type="sequence conflict" description="In Ref. 2; BAG35968." evidence="4" ref="2">
    <original>Q</original>
    <variation>R</variation>
    <location>
        <position position="12"/>
    </location>
</feature>
<protein>
    <recommendedName>
        <fullName evidence="4">Leucine-rich repeat-containing protein 51</fullName>
    </recommendedName>
    <alternativeName>
        <fullName evidence="3">Protein LRTOMT1</fullName>
    </alternativeName>
</protein>
<keyword id="KW-0025">Alternative splicing</keyword>
<keyword id="KW-0963">Cytoplasm</keyword>
<keyword id="KW-0433">Leucine-rich repeat</keyword>
<keyword id="KW-1267">Proteomics identification</keyword>
<keyword id="KW-1185">Reference proteome</keyword>
<keyword id="KW-0677">Repeat</keyword>
<reference key="1">
    <citation type="journal article" date="2008" name="Nat. Genet.">
        <title>Mutations of LRTOMT, a fusion gene with alternative reading frames, cause nonsyndromic deafness in humans.</title>
        <authorList>
            <person name="Ahmed Z.M."/>
            <person name="Masmoudi S."/>
            <person name="Kalay E."/>
            <person name="Belyantseva I.A."/>
            <person name="Mosrati M.A."/>
            <person name="Collin R.W.J."/>
            <person name="Riazuddin S."/>
            <person name="Hmani-Aifa M."/>
            <person name="Venselaar H."/>
            <person name="Kawar M.N."/>
            <person name="Tlili A."/>
            <person name="van der Zwaag B."/>
            <person name="Khan S.Y."/>
            <person name="Ayadi L."/>
            <person name="Riazuddin S.A."/>
            <person name="Morell R.J."/>
            <person name="Griffith A.J."/>
            <person name="Charfedine I."/>
            <person name="Caylan R."/>
            <person name="Oostrik J."/>
            <person name="Karaguzel A."/>
            <person name="Ghorbel A."/>
            <person name="Riazuddin S."/>
            <person name="Friedman T.B."/>
            <person name="Ayadi H."/>
            <person name="Kremer H."/>
        </authorList>
    </citation>
    <scope>NUCLEOTIDE SEQUENCE [MRNA] (ISOFORMS 1; 2; 3; 4 AND 5)</scope>
    <source>
        <tissue>Brain</tissue>
    </source>
</reference>
<reference key="2">
    <citation type="journal article" date="2004" name="Nat. Genet.">
        <title>Complete sequencing and characterization of 21,243 full-length human cDNAs.</title>
        <authorList>
            <person name="Ota T."/>
            <person name="Suzuki Y."/>
            <person name="Nishikawa T."/>
            <person name="Otsuki T."/>
            <person name="Sugiyama T."/>
            <person name="Irie R."/>
            <person name="Wakamatsu A."/>
            <person name="Hayashi K."/>
            <person name="Sato H."/>
            <person name="Nagai K."/>
            <person name="Kimura K."/>
            <person name="Makita H."/>
            <person name="Sekine M."/>
            <person name="Obayashi M."/>
            <person name="Nishi T."/>
            <person name="Shibahara T."/>
            <person name="Tanaka T."/>
            <person name="Ishii S."/>
            <person name="Yamamoto J."/>
            <person name="Saito K."/>
            <person name="Kawai Y."/>
            <person name="Isono Y."/>
            <person name="Nakamura Y."/>
            <person name="Nagahari K."/>
            <person name="Murakami K."/>
            <person name="Yasuda T."/>
            <person name="Iwayanagi T."/>
            <person name="Wagatsuma M."/>
            <person name="Shiratori A."/>
            <person name="Sudo H."/>
            <person name="Hosoiri T."/>
            <person name="Kaku Y."/>
            <person name="Kodaira H."/>
            <person name="Kondo H."/>
            <person name="Sugawara M."/>
            <person name="Takahashi M."/>
            <person name="Kanda K."/>
            <person name="Yokoi T."/>
            <person name="Furuya T."/>
            <person name="Kikkawa E."/>
            <person name="Omura Y."/>
            <person name="Abe K."/>
            <person name="Kamihara K."/>
            <person name="Katsuta N."/>
            <person name="Sato K."/>
            <person name="Tanikawa M."/>
            <person name="Yamazaki M."/>
            <person name="Ninomiya K."/>
            <person name="Ishibashi T."/>
            <person name="Yamashita H."/>
            <person name="Murakawa K."/>
            <person name="Fujimori K."/>
            <person name="Tanai H."/>
            <person name="Kimata M."/>
            <person name="Watanabe M."/>
            <person name="Hiraoka S."/>
            <person name="Chiba Y."/>
            <person name="Ishida S."/>
            <person name="Ono Y."/>
            <person name="Takiguchi S."/>
            <person name="Watanabe S."/>
            <person name="Yosida M."/>
            <person name="Hotuta T."/>
            <person name="Kusano J."/>
            <person name="Kanehori K."/>
            <person name="Takahashi-Fujii A."/>
            <person name="Hara H."/>
            <person name="Tanase T.-O."/>
            <person name="Nomura Y."/>
            <person name="Togiya S."/>
            <person name="Komai F."/>
            <person name="Hara R."/>
            <person name="Takeuchi K."/>
            <person name="Arita M."/>
            <person name="Imose N."/>
            <person name="Musashino K."/>
            <person name="Yuuki H."/>
            <person name="Oshima A."/>
            <person name="Sasaki N."/>
            <person name="Aotsuka S."/>
            <person name="Yoshikawa Y."/>
            <person name="Matsunawa H."/>
            <person name="Ichihara T."/>
            <person name="Shiohata N."/>
            <person name="Sano S."/>
            <person name="Moriya S."/>
            <person name="Momiyama H."/>
            <person name="Satoh N."/>
            <person name="Takami S."/>
            <person name="Terashima Y."/>
            <person name="Suzuki O."/>
            <person name="Nakagawa S."/>
            <person name="Senoh A."/>
            <person name="Mizoguchi H."/>
            <person name="Goto Y."/>
            <person name="Shimizu F."/>
            <person name="Wakebe H."/>
            <person name="Hishigaki H."/>
            <person name="Watanabe T."/>
            <person name="Sugiyama A."/>
            <person name="Takemoto M."/>
            <person name="Kawakami B."/>
            <person name="Yamazaki M."/>
            <person name="Watanabe K."/>
            <person name="Kumagai A."/>
            <person name="Itakura S."/>
            <person name="Fukuzumi Y."/>
            <person name="Fujimori Y."/>
            <person name="Komiyama M."/>
            <person name="Tashiro H."/>
            <person name="Tanigami A."/>
            <person name="Fujiwara T."/>
            <person name="Ono T."/>
            <person name="Yamada K."/>
            <person name="Fujii Y."/>
            <person name="Ozaki K."/>
            <person name="Hirao M."/>
            <person name="Ohmori Y."/>
            <person name="Kawabata A."/>
            <person name="Hikiji T."/>
            <person name="Kobatake N."/>
            <person name="Inagaki H."/>
            <person name="Ikema Y."/>
            <person name="Okamoto S."/>
            <person name="Okitani R."/>
            <person name="Kawakami T."/>
            <person name="Noguchi S."/>
            <person name="Itoh T."/>
            <person name="Shigeta K."/>
            <person name="Senba T."/>
            <person name="Matsumura K."/>
            <person name="Nakajima Y."/>
            <person name="Mizuno T."/>
            <person name="Morinaga M."/>
            <person name="Sasaki M."/>
            <person name="Togashi T."/>
            <person name="Oyama M."/>
            <person name="Hata H."/>
            <person name="Watanabe M."/>
            <person name="Komatsu T."/>
            <person name="Mizushima-Sugano J."/>
            <person name="Satoh T."/>
            <person name="Shirai Y."/>
            <person name="Takahashi Y."/>
            <person name="Nakagawa K."/>
            <person name="Okumura K."/>
            <person name="Nagase T."/>
            <person name="Nomura N."/>
            <person name="Kikuchi H."/>
            <person name="Masuho Y."/>
            <person name="Yamashita R."/>
            <person name="Nakai K."/>
            <person name="Yada T."/>
            <person name="Nakamura Y."/>
            <person name="Ohara O."/>
            <person name="Isogai T."/>
            <person name="Sugano S."/>
        </authorList>
    </citation>
    <scope>NUCLEOTIDE SEQUENCE [LARGE SCALE MRNA] (ISOFORMS 1 AND 6)</scope>
    <source>
        <tissue>Brain</tissue>
        <tissue>Teratocarcinoma</tissue>
    </source>
</reference>
<reference key="3">
    <citation type="journal article" date="2006" name="Nature">
        <title>Human chromosome 11 DNA sequence and analysis including novel gene identification.</title>
        <authorList>
            <person name="Taylor T.D."/>
            <person name="Noguchi H."/>
            <person name="Totoki Y."/>
            <person name="Toyoda A."/>
            <person name="Kuroki Y."/>
            <person name="Dewar K."/>
            <person name="Lloyd C."/>
            <person name="Itoh T."/>
            <person name="Takeda T."/>
            <person name="Kim D.-W."/>
            <person name="She X."/>
            <person name="Barlow K.F."/>
            <person name="Bloom T."/>
            <person name="Bruford E."/>
            <person name="Chang J.L."/>
            <person name="Cuomo C.A."/>
            <person name="Eichler E."/>
            <person name="FitzGerald M.G."/>
            <person name="Jaffe D.B."/>
            <person name="LaButti K."/>
            <person name="Nicol R."/>
            <person name="Park H.-S."/>
            <person name="Seaman C."/>
            <person name="Sougnez C."/>
            <person name="Yang X."/>
            <person name="Zimmer A.R."/>
            <person name="Zody M.C."/>
            <person name="Birren B.W."/>
            <person name="Nusbaum C."/>
            <person name="Fujiyama A."/>
            <person name="Hattori M."/>
            <person name="Rogers J."/>
            <person name="Lander E.S."/>
            <person name="Sakaki Y."/>
        </authorList>
    </citation>
    <scope>NUCLEOTIDE SEQUENCE [LARGE SCALE GENOMIC DNA]</scope>
</reference>
<reference key="4">
    <citation type="submission" date="2005-07" db="EMBL/GenBank/DDBJ databases">
        <authorList>
            <person name="Mural R.J."/>
            <person name="Istrail S."/>
            <person name="Sutton G.G."/>
            <person name="Florea L."/>
            <person name="Halpern A.L."/>
            <person name="Mobarry C.M."/>
            <person name="Lippert R."/>
            <person name="Walenz B."/>
            <person name="Shatkay H."/>
            <person name="Dew I."/>
            <person name="Miller J.R."/>
            <person name="Flanigan M.J."/>
            <person name="Edwards N.J."/>
            <person name="Bolanos R."/>
            <person name="Fasulo D."/>
            <person name="Halldorsson B.V."/>
            <person name="Hannenhalli S."/>
            <person name="Turner R."/>
            <person name="Yooseph S."/>
            <person name="Lu F."/>
            <person name="Nusskern D.R."/>
            <person name="Shue B.C."/>
            <person name="Zheng X.H."/>
            <person name="Zhong F."/>
            <person name="Delcher A.L."/>
            <person name="Huson D.H."/>
            <person name="Kravitz S.A."/>
            <person name="Mouchard L."/>
            <person name="Reinert K."/>
            <person name="Remington K.A."/>
            <person name="Clark A.G."/>
            <person name="Waterman M.S."/>
            <person name="Eichler E.E."/>
            <person name="Adams M.D."/>
            <person name="Hunkapiller M.W."/>
            <person name="Myers E.W."/>
            <person name="Venter J.C."/>
        </authorList>
    </citation>
    <scope>NUCLEOTIDE SEQUENCE [LARGE SCALE GENOMIC DNA]</scope>
</reference>
<reference key="5">
    <citation type="journal article" date="2004" name="Genome Res.">
        <title>The status, quality, and expansion of the NIH full-length cDNA project: the Mammalian Gene Collection (MGC).</title>
        <authorList>
            <consortium name="The MGC Project Team"/>
        </authorList>
    </citation>
    <scope>NUCLEOTIDE SEQUENCE [LARGE SCALE MRNA] (ISOFORM 1)</scope>
    <source>
        <tissue>Ovary</tissue>
    </source>
</reference>
<gene>
    <name evidence="5" type="primary">LRRC51</name>
    <name evidence="3" type="synonym">LRTOMT</name>
</gene>
<organism>
    <name type="scientific">Homo sapiens</name>
    <name type="common">Human</name>
    <dbReference type="NCBI Taxonomy" id="9606"/>
    <lineage>
        <taxon>Eukaryota</taxon>
        <taxon>Metazoa</taxon>
        <taxon>Chordata</taxon>
        <taxon>Craniata</taxon>
        <taxon>Vertebrata</taxon>
        <taxon>Euteleostomi</taxon>
        <taxon>Mammalia</taxon>
        <taxon>Eutheria</taxon>
        <taxon>Euarchontoglires</taxon>
        <taxon>Primates</taxon>
        <taxon>Haplorrhini</taxon>
        <taxon>Catarrhini</taxon>
        <taxon>Hominidae</taxon>
        <taxon>Homo</taxon>
    </lineage>
</organism>
<evidence type="ECO:0000250" key="1"/>
<evidence type="ECO:0000303" key="2">
    <source>
    </source>
</evidence>
<evidence type="ECO:0000303" key="3">
    <source>
    </source>
</evidence>
<evidence type="ECO:0000305" key="4"/>
<evidence type="ECO:0000312" key="5">
    <source>
        <dbReference type="HGNC" id="HGNC:55526"/>
    </source>
</evidence>
<dbReference type="EMBL" id="EU627066">
    <property type="protein sequence ID" value="ACF40876.1"/>
    <property type="molecule type" value="mRNA"/>
</dbReference>
<dbReference type="EMBL" id="EU627067">
    <property type="protein sequence ID" value="ACF40877.1"/>
    <property type="molecule type" value="mRNA"/>
</dbReference>
<dbReference type="EMBL" id="EU627068">
    <property type="protein sequence ID" value="ACF40878.1"/>
    <property type="molecule type" value="mRNA"/>
</dbReference>
<dbReference type="EMBL" id="EU627069">
    <property type="protein sequence ID" value="ACF40879.1"/>
    <property type="molecule type" value="mRNA"/>
</dbReference>
<dbReference type="EMBL" id="EU627070">
    <property type="protein sequence ID" value="ACF40880.1"/>
    <property type="molecule type" value="mRNA"/>
</dbReference>
<dbReference type="EMBL" id="AK298997">
    <property type="protein sequence ID" value="BAH12920.1"/>
    <property type="molecule type" value="mRNA"/>
</dbReference>
<dbReference type="EMBL" id="AK313150">
    <property type="protein sequence ID" value="BAG35968.1"/>
    <property type="molecule type" value="mRNA"/>
</dbReference>
<dbReference type="EMBL" id="AP000812">
    <property type="status" value="NOT_ANNOTATED_CDS"/>
    <property type="molecule type" value="Genomic_DNA"/>
</dbReference>
<dbReference type="EMBL" id="AP002490">
    <property type="status" value="NOT_ANNOTATED_CDS"/>
    <property type="molecule type" value="Genomic_DNA"/>
</dbReference>
<dbReference type="EMBL" id="CH471076">
    <property type="protein sequence ID" value="EAW74832.1"/>
    <property type="molecule type" value="Genomic_DNA"/>
</dbReference>
<dbReference type="EMBL" id="BC012855">
    <property type="protein sequence ID" value="AAH12855.1"/>
    <property type="molecule type" value="mRNA"/>
</dbReference>
<dbReference type="RefSeq" id="NP_001138779.1">
    <molecule id="Q96E66-2"/>
    <property type="nucleotide sequence ID" value="NM_001145307.5"/>
</dbReference>
<dbReference type="RefSeq" id="NP_001192067.1">
    <molecule id="Q96E66-6"/>
    <property type="nucleotide sequence ID" value="NM_001205138.4"/>
</dbReference>
<dbReference type="RefSeq" id="NP_001258400.1">
    <molecule id="Q96E66-3"/>
    <property type="nucleotide sequence ID" value="NM_001271471.3"/>
</dbReference>
<dbReference type="RefSeq" id="NP_001305732.1">
    <molecule id="Q96E66-1"/>
    <property type="nucleotide sequence ID" value="NM_001318803.2"/>
</dbReference>
<dbReference type="RefSeq" id="NP_660352.1">
    <molecule id="Q96E66-1"/>
    <property type="nucleotide sequence ID" value="NM_145309.6"/>
</dbReference>
<dbReference type="RefSeq" id="XP_006718536.1">
    <property type="nucleotide sequence ID" value="XM_006718473.3"/>
</dbReference>
<dbReference type="RefSeq" id="XP_006718537.1">
    <property type="nucleotide sequence ID" value="XM_006718474.3"/>
</dbReference>
<dbReference type="RefSeq" id="XP_011543149.1">
    <property type="nucleotide sequence ID" value="XM_011544847.2"/>
</dbReference>
<dbReference type="RefSeq" id="XP_011543150.1">
    <property type="nucleotide sequence ID" value="XM_011544848.2"/>
</dbReference>
<dbReference type="RefSeq" id="XP_016872848.1">
    <property type="nucleotide sequence ID" value="XM_017017359.1"/>
</dbReference>
<dbReference type="RefSeq" id="XP_016872849.1">
    <property type="nucleotide sequence ID" value="XM_017017360.1"/>
</dbReference>
<dbReference type="SMR" id="Q96E66"/>
<dbReference type="BioGRID" id="128624">
    <property type="interactions" value="18"/>
</dbReference>
<dbReference type="FunCoup" id="Q96E66">
    <property type="interactions" value="248"/>
</dbReference>
<dbReference type="IntAct" id="Q96E66">
    <property type="interactions" value="1"/>
</dbReference>
<dbReference type="STRING" id="9606.ENSP00000496019"/>
<dbReference type="iPTMnet" id="Q96E66"/>
<dbReference type="PhosphoSitePlus" id="Q96E66"/>
<dbReference type="BioMuta" id="LRTOMT"/>
<dbReference type="DMDM" id="74760801"/>
<dbReference type="MassIVE" id="Q96E66"/>
<dbReference type="PeptideAtlas" id="Q96E66"/>
<dbReference type="ProteomicsDB" id="76377">
    <molecule id="Q96E66-1"/>
</dbReference>
<dbReference type="ProteomicsDB" id="76378">
    <molecule id="Q96E66-2"/>
</dbReference>
<dbReference type="ProteomicsDB" id="76379">
    <molecule id="Q96E66-3"/>
</dbReference>
<dbReference type="ProteomicsDB" id="76380">
    <molecule id="Q96E66-4"/>
</dbReference>
<dbReference type="ProteomicsDB" id="76381">
    <molecule id="Q96E66-5"/>
</dbReference>
<dbReference type="ProteomicsDB" id="76382">
    <molecule id="Q96E66-6"/>
</dbReference>
<dbReference type="Antibodypedia" id="34978">
    <property type="antibodies" value="54 antibodies from 16 providers"/>
</dbReference>
<dbReference type="DNASU" id="220074"/>
<dbReference type="Ensembl" id="ENST00000289488.8">
    <molecule id="Q96E66-1"/>
    <property type="protein sequence ID" value="ENSP00000289488.2"/>
    <property type="gene ID" value="ENSG00000184154.16"/>
</dbReference>
<dbReference type="Ensembl" id="ENST00000324866.11">
    <molecule id="Q96E66-3"/>
    <property type="protein sequence ID" value="ENSP00000440693.1"/>
    <property type="gene ID" value="ENSG00000184154.16"/>
</dbReference>
<dbReference type="Ensembl" id="ENST00000423494.6">
    <molecule id="Q96E66-6"/>
    <property type="protein sequence ID" value="ENSP00000441249.1"/>
    <property type="gene ID" value="ENSG00000184154.16"/>
</dbReference>
<dbReference type="Ensembl" id="ENST00000536917.2">
    <molecule id="Q96E66-3"/>
    <property type="protein sequence ID" value="ENSP00000443421.1"/>
    <property type="gene ID" value="ENSG00000184154.16"/>
</dbReference>
<dbReference type="Ensembl" id="ENST00000538413.6">
    <molecule id="Q96E66-1"/>
    <property type="protein sequence ID" value="ENSP00000438762.2"/>
    <property type="gene ID" value="ENSG00000184154.16"/>
</dbReference>
<dbReference type="Ensembl" id="ENST00000538478.5">
    <molecule id="Q96E66-1"/>
    <property type="protein sequence ID" value="ENSP00000444583.1"/>
    <property type="gene ID" value="ENSG00000184154.16"/>
</dbReference>
<dbReference type="Ensembl" id="ENST00000541614.5">
    <molecule id="Q96E66-2"/>
    <property type="protein sequence ID" value="ENSP00000438522.1"/>
    <property type="gene ID" value="ENSG00000184154.16"/>
</dbReference>
<dbReference type="Ensembl" id="ENST00000642648.1">
    <molecule id="Q96E66-1"/>
    <property type="protein sequence ID" value="ENSP00000494362.1"/>
    <property type="gene ID" value="ENSG00000184154.16"/>
</dbReference>
<dbReference type="Ensembl" id="ENST00000647530.1">
    <molecule id="Q96E66-1"/>
    <property type="protein sequence ID" value="ENSP00000494072.1"/>
    <property type="gene ID" value="ENSG00000184154.16"/>
</dbReference>
<dbReference type="GeneID" id="120356739"/>
<dbReference type="KEGG" id="hsa:120356739"/>
<dbReference type="MANE-Select" id="ENST00000289488.8">
    <property type="protein sequence ID" value="ENSP00000289488.2"/>
    <property type="RefSeq nucleotide sequence ID" value="NM_145309.6"/>
    <property type="RefSeq protein sequence ID" value="NP_660352.1"/>
</dbReference>
<dbReference type="UCSC" id="uc001orr.4">
    <molecule id="Q96E66-1"/>
    <property type="organism name" value="human"/>
</dbReference>
<dbReference type="AGR" id="HGNC:55526"/>
<dbReference type="CTD" id="120356739"/>
<dbReference type="DisGeNET" id="120356739"/>
<dbReference type="DisGeNET" id="220074"/>
<dbReference type="GeneCards" id="LRRC51"/>
<dbReference type="HGNC" id="HGNC:55526">
    <property type="gene designation" value="LRRC51"/>
</dbReference>
<dbReference type="HPA" id="ENSG00000184154">
    <property type="expression patterns" value="Tissue enhanced (fallopian tube, testis)"/>
</dbReference>
<dbReference type="MalaCards" id="LRRC51"/>
<dbReference type="MIM" id="612414">
    <property type="type" value="gene"/>
</dbReference>
<dbReference type="neXtProt" id="NX_Q96E66"/>
<dbReference type="OpenTargets" id="ENSG00000184154"/>
<dbReference type="PharmGKB" id="PA164722133"/>
<dbReference type="VEuPathDB" id="HostDB:ENSG00000184154"/>
<dbReference type="GeneTree" id="ENSGT00510000047925"/>
<dbReference type="HOGENOM" id="CLU_095080_1_1_1"/>
<dbReference type="InParanoid" id="Q96E66"/>
<dbReference type="OMA" id="LWHQSNS"/>
<dbReference type="OrthoDB" id="676979at2759"/>
<dbReference type="PhylomeDB" id="Q96E66"/>
<dbReference type="PathwayCommons" id="Q96E66"/>
<dbReference type="SignaLink" id="Q96E66"/>
<dbReference type="BioGRID-ORCS" id="220074">
    <property type="hits" value="10 hits in 1151 CRISPR screens"/>
</dbReference>
<dbReference type="ChiTaRS" id="LRTOMT">
    <property type="organism name" value="human"/>
</dbReference>
<dbReference type="GenomeRNAi" id="220074"/>
<dbReference type="Pharos" id="Q96E66">
    <property type="development level" value="Tbio"/>
</dbReference>
<dbReference type="PRO" id="PR:Q96E66"/>
<dbReference type="Proteomes" id="UP000005640">
    <property type="component" value="Chromosome 11"/>
</dbReference>
<dbReference type="Bgee" id="ENSG00000184154">
    <property type="expression patterns" value="Expressed in right testis and 100 other cell types or tissues"/>
</dbReference>
<dbReference type="ExpressionAtlas" id="Q96E66">
    <property type="expression patterns" value="baseline and differential"/>
</dbReference>
<dbReference type="GO" id="GO:0005930">
    <property type="term" value="C:axoneme"/>
    <property type="evidence" value="ECO:0000318"/>
    <property type="project" value="GO_Central"/>
</dbReference>
<dbReference type="Gene3D" id="3.80.10.10">
    <property type="entry name" value="Ribonuclease Inhibitor"/>
    <property type="match status" value="1"/>
</dbReference>
<dbReference type="InterPro" id="IPR001611">
    <property type="entry name" value="Leu-rich_rpt"/>
</dbReference>
<dbReference type="InterPro" id="IPR032675">
    <property type="entry name" value="LRR_dom_sf"/>
</dbReference>
<dbReference type="PANTHER" id="PTHR46545">
    <property type="entry name" value="LEUCINE-RICH REPEAT-CONTAINING PROTEIN 51"/>
    <property type="match status" value="1"/>
</dbReference>
<dbReference type="PANTHER" id="PTHR46545:SF1">
    <property type="entry name" value="LEUCINE-RICH REPEAT-CONTAINING PROTEIN 51"/>
    <property type="match status" value="1"/>
</dbReference>
<dbReference type="Pfam" id="PF14580">
    <property type="entry name" value="LRR_9"/>
    <property type="match status" value="1"/>
</dbReference>
<dbReference type="SUPFAM" id="SSF52075">
    <property type="entry name" value="Outer arm dynein light chain 1"/>
    <property type="match status" value="1"/>
</dbReference>
<dbReference type="PROSITE" id="PS51450">
    <property type="entry name" value="LRR"/>
    <property type="match status" value="4"/>
</dbReference>
<comment type="subcellular location">
    <subcellularLocation>
        <location evidence="1">Cytoplasm</location>
    </subcellularLocation>
</comment>
<comment type="alternative products">
    <event type="alternative splicing"/>
    <isoform>
        <id>Q96E66-1</id>
        <name>1</name>
        <name>A</name>
        <sequence type="displayed"/>
    </isoform>
    <isoform>
        <id>Q96E66-2</id>
        <name>2</name>
        <name>B</name>
        <sequence type="described" ref="VSP_036895"/>
    </isoform>
    <isoform>
        <id>Q96E66-3</id>
        <name>3</name>
        <name>C</name>
        <sequence type="described" ref="VSP_036896"/>
    </isoform>
    <isoform>
        <id>Q96E66-4</id>
        <name>4</name>
        <name>D</name>
        <sequence type="described" ref="VSP_036893"/>
    </isoform>
    <isoform>
        <id>Q96E66-5</id>
        <name>5</name>
        <name>E</name>
        <sequence type="described" ref="VSP_036894"/>
    </isoform>
    <isoform>
        <id>Q96E66-6</id>
        <name>6</name>
        <sequence type="described" ref="VSP_041852"/>
    </isoform>
</comment>
<comment type="miscellaneous">
    <text evidence="3">LRRC51 and TOMT were originally considered as alternative reading frames, LRTOMT1 and LRTOMT2 of the same LRTOMT gene in primates.</text>
</comment>
<comment type="miscellaneous">
    <molecule>Isoform 4</molecule>
    <text evidence="4">May be produced at very low levels due to a premature stop codon in the mRNA, leading to nonsense-mediated mRNA decay.</text>
</comment>
<comment type="miscellaneous">
    <molecule>Isoform 5</molecule>
    <text evidence="4">May be produced at very low levels due to a premature stop codon in the mRNA, leading to nonsense-mediated mRNA decay.</text>
</comment>
<name>LRC51_HUMAN</name>